<organism>
    <name type="scientific">Helicobacter hepaticus (strain ATCC 51449 / 3B1)</name>
    <dbReference type="NCBI Taxonomy" id="235279"/>
    <lineage>
        <taxon>Bacteria</taxon>
        <taxon>Pseudomonadati</taxon>
        <taxon>Campylobacterota</taxon>
        <taxon>Epsilonproteobacteria</taxon>
        <taxon>Campylobacterales</taxon>
        <taxon>Helicobacteraceae</taxon>
        <taxon>Helicobacter</taxon>
    </lineage>
</organism>
<gene>
    <name evidence="1" type="primary">fliW1</name>
    <name type="ordered locus">HH_0843</name>
</gene>
<name>FLIW1_HELHP</name>
<protein>
    <recommendedName>
        <fullName evidence="1">Flagellar assembly factor FliW 1</fullName>
    </recommendedName>
</protein>
<reference key="1">
    <citation type="journal article" date="2003" name="Proc. Natl. Acad. Sci. U.S.A.">
        <title>The complete genome sequence of the carcinogenic bacterium Helicobacter hepaticus.</title>
        <authorList>
            <person name="Suerbaum S."/>
            <person name="Josenhans C."/>
            <person name="Sterzenbach T."/>
            <person name="Drescher B."/>
            <person name="Brandt P."/>
            <person name="Bell M."/>
            <person name="Droege M."/>
            <person name="Fartmann B."/>
            <person name="Fischer H.-P."/>
            <person name="Ge Z."/>
            <person name="Hoerster A."/>
            <person name="Holland R."/>
            <person name="Klein K."/>
            <person name="Koenig J."/>
            <person name="Macko L."/>
            <person name="Mendz G.L."/>
            <person name="Nyakatura G."/>
            <person name="Schauer D.B."/>
            <person name="Shen Z."/>
            <person name="Weber J."/>
            <person name="Frosch M."/>
            <person name="Fox J.G."/>
        </authorList>
    </citation>
    <scope>NUCLEOTIDE SEQUENCE [LARGE SCALE GENOMIC DNA]</scope>
    <source>
        <strain>ATCC 51449 / 3B1</strain>
    </source>
</reference>
<keyword id="KW-1005">Bacterial flagellum biogenesis</keyword>
<keyword id="KW-0143">Chaperone</keyword>
<keyword id="KW-0963">Cytoplasm</keyword>
<keyword id="KW-1185">Reference proteome</keyword>
<keyword id="KW-0810">Translation regulation</keyword>
<accession>Q7VHX0</accession>
<comment type="function">
    <text evidence="1">Acts as an anti-CsrA protein, binds CsrA and prevents it from repressing translation of its target genes, one of which is flagellin. Binds to flagellin and participates in the assembly of the flagellum.</text>
</comment>
<comment type="subunit">
    <text evidence="1">Interacts with translational regulator CsrA and flagellin(s).</text>
</comment>
<comment type="subcellular location">
    <subcellularLocation>
        <location evidence="1">Cytoplasm</location>
    </subcellularLocation>
</comment>
<comment type="similarity">
    <text evidence="1">Belongs to the FliW family.</text>
</comment>
<comment type="sequence caution" evidence="2">
    <conflict type="erroneous initiation">
        <sequence resource="EMBL-CDS" id="AAP77440"/>
    </conflict>
    <text>Extended N-terminus.</text>
</comment>
<sequence>MIFEVKSPILGFESVAKMKLEKIDDLFMKLYNAEGEVPHFTLVNPFLLREYEFDVPASIKILLDLSDAKNLLIANIMVIQQPIENSTINFLAPLIFNFDNLTMAQVVLDSTQYPLYSLNEPIGKYYDKEEAQKGEQAAPVRDSQKK</sequence>
<evidence type="ECO:0000255" key="1">
    <source>
        <dbReference type="HAMAP-Rule" id="MF_01185"/>
    </source>
</evidence>
<evidence type="ECO:0000305" key="2"/>
<dbReference type="EMBL" id="AE017125">
    <property type="protein sequence ID" value="AAP77440.1"/>
    <property type="status" value="ALT_INIT"/>
    <property type="molecule type" value="Genomic_DNA"/>
</dbReference>
<dbReference type="SMR" id="Q7VHX0"/>
<dbReference type="STRING" id="235279.HH_0843"/>
<dbReference type="KEGG" id="hhe:HH_0843"/>
<dbReference type="eggNOG" id="COG1699">
    <property type="taxonomic scope" value="Bacteria"/>
</dbReference>
<dbReference type="HOGENOM" id="CLU_112356_2_0_7"/>
<dbReference type="OrthoDB" id="5372942at2"/>
<dbReference type="Proteomes" id="UP000002495">
    <property type="component" value="Chromosome"/>
</dbReference>
<dbReference type="GO" id="GO:0005737">
    <property type="term" value="C:cytoplasm"/>
    <property type="evidence" value="ECO:0007669"/>
    <property type="project" value="UniProtKB-SubCell"/>
</dbReference>
<dbReference type="GO" id="GO:0044780">
    <property type="term" value="P:bacterial-type flagellum assembly"/>
    <property type="evidence" value="ECO:0007669"/>
    <property type="project" value="UniProtKB-UniRule"/>
</dbReference>
<dbReference type="GO" id="GO:0006417">
    <property type="term" value="P:regulation of translation"/>
    <property type="evidence" value="ECO:0007669"/>
    <property type="project" value="UniProtKB-KW"/>
</dbReference>
<dbReference type="Gene3D" id="2.30.290.10">
    <property type="entry name" value="BH3618-like"/>
    <property type="match status" value="1"/>
</dbReference>
<dbReference type="HAMAP" id="MF_01185">
    <property type="entry name" value="FliW"/>
    <property type="match status" value="1"/>
</dbReference>
<dbReference type="InterPro" id="IPR003775">
    <property type="entry name" value="Flagellar_assembly_factor_FliW"/>
</dbReference>
<dbReference type="InterPro" id="IPR024046">
    <property type="entry name" value="Flagellar_assmbl_FliW_dom_sf"/>
</dbReference>
<dbReference type="NCBIfam" id="NF009790">
    <property type="entry name" value="PRK13282.1"/>
    <property type="match status" value="1"/>
</dbReference>
<dbReference type="PANTHER" id="PTHR39190">
    <property type="entry name" value="FLAGELLAR ASSEMBLY FACTOR FLIW"/>
    <property type="match status" value="1"/>
</dbReference>
<dbReference type="PANTHER" id="PTHR39190:SF1">
    <property type="entry name" value="FLAGELLAR ASSEMBLY FACTOR FLIW"/>
    <property type="match status" value="1"/>
</dbReference>
<dbReference type="Pfam" id="PF02623">
    <property type="entry name" value="FliW"/>
    <property type="match status" value="1"/>
</dbReference>
<dbReference type="SUPFAM" id="SSF141457">
    <property type="entry name" value="BH3618-like"/>
    <property type="match status" value="1"/>
</dbReference>
<proteinExistence type="inferred from homology"/>
<feature type="chain" id="PRO_0000272993" description="Flagellar assembly factor FliW 1">
    <location>
        <begin position="1"/>
        <end position="146"/>
    </location>
</feature>